<evidence type="ECO:0000255" key="1">
    <source>
        <dbReference type="HAMAP-Rule" id="MF_01338"/>
    </source>
</evidence>
<evidence type="ECO:0000305" key="2"/>
<name>RBL1A_ACIF2</name>
<organism>
    <name type="scientific">Acidithiobacillus ferrooxidans (strain ATCC 23270 / DSM 14882 / CIP 104768 / NCIMB 8455)</name>
    <name type="common">Ferrobacillus ferrooxidans (strain ATCC 23270)</name>
    <dbReference type="NCBI Taxonomy" id="243159"/>
    <lineage>
        <taxon>Bacteria</taxon>
        <taxon>Pseudomonadati</taxon>
        <taxon>Pseudomonadota</taxon>
        <taxon>Acidithiobacillia</taxon>
        <taxon>Acidithiobacillales</taxon>
        <taxon>Acidithiobacillaceae</taxon>
        <taxon>Acidithiobacillus</taxon>
    </lineage>
</organism>
<dbReference type="EC" id="4.1.1.39" evidence="1"/>
<dbReference type="EMBL" id="AF129925">
    <property type="protein sequence ID" value="AAD30508.1"/>
    <property type="molecule type" value="Genomic_DNA"/>
</dbReference>
<dbReference type="EMBL" id="CP001219">
    <property type="protein sequence ID" value="ACK79627.1"/>
    <property type="molecule type" value="Genomic_DNA"/>
</dbReference>
<dbReference type="RefSeq" id="WP_012536704.1">
    <property type="nucleotide sequence ID" value="NC_011761.1"/>
</dbReference>
<dbReference type="SMR" id="B7JB30"/>
<dbReference type="STRING" id="243159.AFE_1691"/>
<dbReference type="PaxDb" id="243159-AFE_1691"/>
<dbReference type="GeneID" id="65280880"/>
<dbReference type="KEGG" id="afr:AFE_1691"/>
<dbReference type="eggNOG" id="COG1850">
    <property type="taxonomic scope" value="Bacteria"/>
</dbReference>
<dbReference type="HOGENOM" id="CLU_031450_2_0_6"/>
<dbReference type="CD-CODE" id="EED4A971">
    <property type="entry name" value="Synthetic Condensate 000152"/>
</dbReference>
<dbReference type="Proteomes" id="UP000001362">
    <property type="component" value="Chromosome"/>
</dbReference>
<dbReference type="GO" id="GO:0000287">
    <property type="term" value="F:magnesium ion binding"/>
    <property type="evidence" value="ECO:0007669"/>
    <property type="project" value="UniProtKB-UniRule"/>
</dbReference>
<dbReference type="GO" id="GO:0004497">
    <property type="term" value="F:monooxygenase activity"/>
    <property type="evidence" value="ECO:0007669"/>
    <property type="project" value="UniProtKB-KW"/>
</dbReference>
<dbReference type="GO" id="GO:0016984">
    <property type="term" value="F:ribulose-bisphosphate carboxylase activity"/>
    <property type="evidence" value="ECO:0007669"/>
    <property type="project" value="UniProtKB-UniRule"/>
</dbReference>
<dbReference type="GO" id="GO:0019253">
    <property type="term" value="P:reductive pentose-phosphate cycle"/>
    <property type="evidence" value="ECO:0007669"/>
    <property type="project" value="UniProtKB-UniRule"/>
</dbReference>
<dbReference type="Gene3D" id="3.20.20.110">
    <property type="entry name" value="Ribulose bisphosphate carboxylase, large subunit, C-terminal domain"/>
    <property type="match status" value="1"/>
</dbReference>
<dbReference type="Gene3D" id="3.30.70.150">
    <property type="entry name" value="RuBisCO large subunit, N-terminal domain"/>
    <property type="match status" value="1"/>
</dbReference>
<dbReference type="HAMAP" id="MF_01338">
    <property type="entry name" value="RuBisCO_L_type1"/>
    <property type="match status" value="1"/>
</dbReference>
<dbReference type="InterPro" id="IPR033966">
    <property type="entry name" value="RuBisCO"/>
</dbReference>
<dbReference type="InterPro" id="IPR020878">
    <property type="entry name" value="RuBisCo_large_chain_AS"/>
</dbReference>
<dbReference type="InterPro" id="IPR000685">
    <property type="entry name" value="RuBisCO_lsu_C"/>
</dbReference>
<dbReference type="InterPro" id="IPR036376">
    <property type="entry name" value="RuBisCO_lsu_C_sf"/>
</dbReference>
<dbReference type="InterPro" id="IPR017443">
    <property type="entry name" value="RuBisCO_lsu_fd_N"/>
</dbReference>
<dbReference type="InterPro" id="IPR036422">
    <property type="entry name" value="RuBisCO_lsu_N_sf"/>
</dbReference>
<dbReference type="InterPro" id="IPR020888">
    <property type="entry name" value="RuBisCO_lsuI"/>
</dbReference>
<dbReference type="NCBIfam" id="NF003252">
    <property type="entry name" value="PRK04208.1"/>
    <property type="match status" value="1"/>
</dbReference>
<dbReference type="PANTHER" id="PTHR42704">
    <property type="entry name" value="RIBULOSE BISPHOSPHATE CARBOXYLASE"/>
    <property type="match status" value="1"/>
</dbReference>
<dbReference type="PANTHER" id="PTHR42704:SF17">
    <property type="entry name" value="RIBULOSE BISPHOSPHATE CARBOXYLASE LARGE CHAIN"/>
    <property type="match status" value="1"/>
</dbReference>
<dbReference type="Pfam" id="PF00016">
    <property type="entry name" value="RuBisCO_large"/>
    <property type="match status" value="1"/>
</dbReference>
<dbReference type="Pfam" id="PF02788">
    <property type="entry name" value="RuBisCO_large_N"/>
    <property type="match status" value="1"/>
</dbReference>
<dbReference type="SFLD" id="SFLDG01052">
    <property type="entry name" value="RuBisCO"/>
    <property type="match status" value="1"/>
</dbReference>
<dbReference type="SFLD" id="SFLDS00014">
    <property type="entry name" value="RuBisCO"/>
    <property type="match status" value="1"/>
</dbReference>
<dbReference type="SFLD" id="SFLDG00301">
    <property type="entry name" value="RuBisCO-like_proteins"/>
    <property type="match status" value="1"/>
</dbReference>
<dbReference type="SUPFAM" id="SSF51649">
    <property type="entry name" value="RuBisCo, C-terminal domain"/>
    <property type="match status" value="1"/>
</dbReference>
<dbReference type="SUPFAM" id="SSF54966">
    <property type="entry name" value="RuBisCO, large subunit, small (N-terminal) domain"/>
    <property type="match status" value="1"/>
</dbReference>
<dbReference type="PROSITE" id="PS00157">
    <property type="entry name" value="RUBISCO_LARGE"/>
    <property type="match status" value="1"/>
</dbReference>
<reference key="1">
    <citation type="journal article" date="2003" name="Curr. Microbiol.">
        <title>Organization of carboxysome genes in the thiobacilli.</title>
        <authorList>
            <person name="Cannon G.C."/>
            <person name="Baker S.H."/>
            <person name="Soyer F."/>
            <person name="Johnson D.R."/>
            <person name="Bradburne C.E."/>
            <person name="Mehlman J.L."/>
            <person name="Davies P.S."/>
            <person name="Jiang Q.L."/>
            <person name="Heinhorst S."/>
            <person name="Shively J.M."/>
        </authorList>
    </citation>
    <scope>NUCLEOTIDE SEQUENCE [GENOMIC DNA]</scope>
</reference>
<reference key="2">
    <citation type="journal article" date="2008" name="BMC Genomics">
        <title>Acidithiobacillus ferrooxidans metabolism: from genome sequence to industrial applications.</title>
        <authorList>
            <person name="Valdes J."/>
            <person name="Pedroso I."/>
            <person name="Quatrini R."/>
            <person name="Dodson R.J."/>
            <person name="Tettelin H."/>
            <person name="Blake R. II"/>
            <person name="Eisen J.A."/>
            <person name="Holmes D.S."/>
        </authorList>
    </citation>
    <scope>NUCLEOTIDE SEQUENCE [LARGE SCALE GENOMIC DNA]</scope>
    <source>
        <strain>ATCC 23270 / DSM 14882 / CIP 104768 / NCIMB 8455</strain>
    </source>
</reference>
<feature type="chain" id="PRO_0000369190" description="Ribulose bisphosphate carboxylase large chain 1">
    <location>
        <begin position="1"/>
        <end position="473"/>
    </location>
</feature>
<feature type="active site" description="Proton acceptor" evidence="1">
    <location>
        <position position="168"/>
    </location>
</feature>
<feature type="active site" description="Proton acceptor" evidence="1">
    <location>
        <position position="287"/>
    </location>
</feature>
<feature type="binding site" description="in homodimeric partner" evidence="1">
    <location>
        <position position="116"/>
    </location>
    <ligand>
        <name>substrate</name>
    </ligand>
</feature>
<feature type="binding site" evidence="1">
    <location>
        <position position="166"/>
    </location>
    <ligand>
        <name>substrate</name>
    </ligand>
</feature>
<feature type="binding site" evidence="1">
    <location>
        <position position="170"/>
    </location>
    <ligand>
        <name>substrate</name>
    </ligand>
</feature>
<feature type="binding site" description="via carbamate group" evidence="1">
    <location>
        <position position="194"/>
    </location>
    <ligand>
        <name>Mg(2+)</name>
        <dbReference type="ChEBI" id="CHEBI:18420"/>
    </ligand>
</feature>
<feature type="binding site" evidence="1">
    <location>
        <position position="196"/>
    </location>
    <ligand>
        <name>Mg(2+)</name>
        <dbReference type="ChEBI" id="CHEBI:18420"/>
    </ligand>
</feature>
<feature type="binding site" evidence="1">
    <location>
        <position position="197"/>
    </location>
    <ligand>
        <name>Mg(2+)</name>
        <dbReference type="ChEBI" id="CHEBI:18420"/>
    </ligand>
</feature>
<feature type="binding site" evidence="1">
    <location>
        <position position="288"/>
    </location>
    <ligand>
        <name>substrate</name>
    </ligand>
</feature>
<feature type="binding site" evidence="1">
    <location>
        <position position="320"/>
    </location>
    <ligand>
        <name>substrate</name>
    </ligand>
</feature>
<feature type="binding site" evidence="1">
    <location>
        <position position="372"/>
    </location>
    <ligand>
        <name>substrate</name>
    </ligand>
</feature>
<feature type="site" description="Transition state stabilizer" evidence="1">
    <location>
        <position position="327"/>
    </location>
</feature>
<feature type="modified residue" description="N6-carboxylysine" evidence="1">
    <location>
        <position position="194"/>
    </location>
</feature>
<proteinExistence type="inferred from homology"/>
<comment type="function">
    <text evidence="1">RuBisCO catalyzes two reactions: the carboxylation of D-ribulose 1,5-bisphosphate, the primary event in carbon dioxide fixation, as well as the oxidative fragmentation of the pentose substrate. Both reactions occur simultaneously and in competition at the same active site.</text>
</comment>
<comment type="catalytic activity">
    <reaction evidence="1">
        <text>2 (2R)-3-phosphoglycerate + 2 H(+) = D-ribulose 1,5-bisphosphate + CO2 + H2O</text>
        <dbReference type="Rhea" id="RHEA:23124"/>
        <dbReference type="ChEBI" id="CHEBI:15377"/>
        <dbReference type="ChEBI" id="CHEBI:15378"/>
        <dbReference type="ChEBI" id="CHEBI:16526"/>
        <dbReference type="ChEBI" id="CHEBI:57870"/>
        <dbReference type="ChEBI" id="CHEBI:58272"/>
        <dbReference type="EC" id="4.1.1.39"/>
    </reaction>
</comment>
<comment type="catalytic activity">
    <reaction evidence="1">
        <text>D-ribulose 1,5-bisphosphate + O2 = 2-phosphoglycolate + (2R)-3-phosphoglycerate + 2 H(+)</text>
        <dbReference type="Rhea" id="RHEA:36631"/>
        <dbReference type="ChEBI" id="CHEBI:15378"/>
        <dbReference type="ChEBI" id="CHEBI:15379"/>
        <dbReference type="ChEBI" id="CHEBI:57870"/>
        <dbReference type="ChEBI" id="CHEBI:58033"/>
        <dbReference type="ChEBI" id="CHEBI:58272"/>
    </reaction>
</comment>
<comment type="cofactor">
    <cofactor evidence="1">
        <name>Mg(2+)</name>
        <dbReference type="ChEBI" id="CHEBI:18420"/>
    </cofactor>
    <text evidence="1">Binds 1 Mg(2+) ion per subunit.</text>
</comment>
<comment type="subunit">
    <text evidence="1">Heterohexadecamer of 8 large chains and 8 small chains.</text>
</comment>
<comment type="miscellaneous">
    <text evidence="1">The basic functional RuBisCO is composed of a large chain homodimer in a 'head-to-tail' conformation. In form I RuBisCO this homodimer is arranged in a barrel-like tetramer with the small subunits forming a tetrameric 'cap' on each end of the 'barrel'.</text>
</comment>
<comment type="similarity">
    <text evidence="1">Belongs to the RuBisCO large chain family. Type I subfamily.</text>
</comment>
<comment type="caution">
    <text evidence="2">In A.ferrooxidans two similar set of genes code for RuBisCO large and small chains: the rbcL1-rbcS1 and the rbcL2-rbcS2 sets.</text>
</comment>
<accession>B7JB30</accession>
<accession>P28895</accession>
<accession>Q9X5Z0</accession>
<sequence length="473" mass="52793">MAVKKYEAGVKEYRQTYWAPEYVPLDSDILACFKITPQPGVDREEAAAAVAAESSTGTWTTVWTDLLTDMDYYKGRAYRIEDVPGDDTSFYAFIAYPIDLFEEGSVVNVFTSLVGNVFGFKAVRALRLEDVRFPLAYVKTCNGPPHGIQVERDKMNKYGRPMLGCTIKPKLGLSAKNYGRAVYECLRGGLDFTKDDENVNSQPFMRWRDRFLFVADAIHTAEAETGERKGHYLNVTAPSPEEMYERAEFAKELNMPIIMHDFLTGGFCANTGLARWCRKTGTLLHIHRAMHAVVDRNPHHGIHFRVLVKALRLSGGDHLHTGTVVGKLEGDRASTQGWVDLLRESFVPEDRSRGIFFDQDWGSMPGVFAVASGGIHVWHMPSLLAIFGDDAVFQFGGGTLGHPWGNAAGAAANRVALEACVEARNEGRDLEREGKDILTNAAKDSPELKIALETWKEIKFEFDTVDKLDVVNR</sequence>
<keyword id="KW-0113">Calvin cycle</keyword>
<keyword id="KW-0120">Carbon dioxide fixation</keyword>
<keyword id="KW-0456">Lyase</keyword>
<keyword id="KW-0460">Magnesium</keyword>
<keyword id="KW-0479">Metal-binding</keyword>
<keyword id="KW-0503">Monooxygenase</keyword>
<keyword id="KW-0560">Oxidoreductase</keyword>
<keyword id="KW-1185">Reference proteome</keyword>
<protein>
    <recommendedName>
        <fullName evidence="1">Ribulose bisphosphate carboxylase large chain 1</fullName>
        <shortName evidence="1">RuBisCO large subunit 1</shortName>
        <ecNumber evidence="1">4.1.1.39</ecNumber>
    </recommendedName>
</protein>
<gene>
    <name evidence="1" type="primary">cbbL1</name>
    <name evidence="1" type="synonym">rbcL1</name>
    <name type="ordered locus">AFE_1691</name>
</gene>